<reference key="1">
    <citation type="journal article" date="2010" name="PLoS ONE">
        <title>The complete genome sequence of Haloferax volcanii DS2, a model archaeon.</title>
        <authorList>
            <person name="Hartman A.L."/>
            <person name="Norais C."/>
            <person name="Badger J.H."/>
            <person name="Delmas S."/>
            <person name="Haldenby S."/>
            <person name="Madupu R."/>
            <person name="Robinson J."/>
            <person name="Khouri H."/>
            <person name="Ren Q."/>
            <person name="Lowe T.M."/>
            <person name="Maupin-Furlow J."/>
            <person name="Pohlschroder M."/>
            <person name="Daniels C."/>
            <person name="Pfeiffer F."/>
            <person name="Allers T."/>
            <person name="Eisen J.A."/>
        </authorList>
    </citation>
    <scope>NUCLEOTIDE SEQUENCE [LARGE SCALE GENOMIC DNA]</scope>
    <source>
        <strain evidence="5">ATCC 29605 / DSM 3757 / JCM 8879 / NBRC 14742 / NCIMB 2012 / VKM B-1768 / DS2</strain>
    </source>
</reference>
<reference key="2">
    <citation type="journal article" date="2012" name="J. Biol. Chem.">
        <title>An archaeal immune system can detect multiple protospacer adjacent motifs (PAMs) to target invader DNA.</title>
        <authorList>
            <person name="Fischer S."/>
            <person name="Maier L.K."/>
            <person name="Stoll B."/>
            <person name="Brendel J."/>
            <person name="Fischer E."/>
            <person name="Pfeiffer F."/>
            <person name="Dyall-Smith M."/>
            <person name="Marchfelder A."/>
        </authorList>
    </citation>
    <scope>FUNCTION</scope>
    <scope>DISRUPTION PHENOTYPE</scope>
    <source>
        <strain>DS2 / DS70 / H26</strain>
    </source>
</reference>
<geneLocation type="plasmid">
    <name>pHV4</name>
</geneLocation>
<proteinExistence type="inferred from homology"/>
<comment type="function">
    <text evidence="1 2">CRISPR (clustered regularly interspaced short palindromic repeat), is an adaptive immune system that provides protection against mobile genetic elements (viruses, transposable elements and conjugative plasmids). CRISPR clusters contain spacers, sequences complementary to antecedent mobile elements, and target invading nucleic acids. CRISPR clusters are transcribed and processed into CRISPR RNA (crRNA). Acts as a dsDNA endonuclease. Involved in the integration of spacer DNA into the CRISPR cassette. Plasmid targeted by CRISPR locus P1 transform wild-type cells very poorly (PubMed:22767603).</text>
</comment>
<comment type="cofactor">
    <cofactor evidence="1">
        <name>Mg(2+)</name>
        <dbReference type="ChEBI" id="CHEBI:18420"/>
    </cofactor>
    <cofactor evidence="1">
        <name>Mn(2+)</name>
        <dbReference type="ChEBI" id="CHEBI:29035"/>
    </cofactor>
</comment>
<comment type="subunit">
    <text evidence="1">Homodimer, forms a heterotetramer with a Cas2 homodimer.</text>
</comment>
<comment type="disruption phenotype">
    <text evidence="2">Loss of the 8 Cas genes in this locus (cas1, cas2, cas3, cas4, cas5, cas6, cas7 and cas8b) leads to loss of CRISPR interference against plasmid targeted by this CRISPR locus, i.e. plasmid is not destroyed by CRISPR.</text>
</comment>
<comment type="miscellaneous">
    <text evidence="3 4">There are 3 CRISPR RNA loci in this organism and a single cas gene locus. A CRISPR-Cas type I-B system.</text>
</comment>
<comment type="similarity">
    <text evidence="1">Belongs to the CRISPR-associated endonuclease Cas1 family.</text>
</comment>
<sequence>MTKANHHIFADGELSRKEGTLRIDTLEGETKYLPVESIDALYLHGQISFNTRALGLLNKHGVPVHIFGWKDYYRGSYLPKRSQLSGNTVVEQVRAYDNTERRLRIGHRIIEASIHNMRANLQYYSGRRGDFDSVVETLRELKTAVSDTQRIDELRAVEGDARKRYYDCFDSILEAPFRLAKREYNPPSNETNALISFLNGMVYTSCVSAIRKTALDPTVGFVHEPGERRFTLSLDIADIFKPILADRLVFRLVNRKQITTDDFETELAGCLLTEQGRLTVLEEFERSLDQTVQHPRLKRKVSFKTLIQTDVYSLKKHLLTGEPYHATEKWW</sequence>
<feature type="chain" id="PRO_0000432148" description="CRISPR-associated endonuclease Cas1">
    <location>
        <begin position="1"/>
        <end position="331"/>
    </location>
</feature>
<feature type="binding site" evidence="1">
    <location>
        <position position="158"/>
    </location>
    <ligand>
        <name>Mn(2+)</name>
        <dbReference type="ChEBI" id="CHEBI:29035"/>
    </ligand>
</feature>
<feature type="binding site" evidence="1">
    <location>
        <position position="223"/>
    </location>
    <ligand>
        <name>Mn(2+)</name>
        <dbReference type="ChEBI" id="CHEBI:29035"/>
    </ligand>
</feature>
<feature type="binding site" evidence="1">
    <location>
        <position position="238"/>
    </location>
    <ligand>
        <name>Mn(2+)</name>
        <dbReference type="ChEBI" id="CHEBI:29035"/>
    </ligand>
</feature>
<gene>
    <name evidence="1" type="primary">cas1</name>
    <name type="ordered locus">HVO_A0211</name>
</gene>
<organism>
    <name type="scientific">Haloferax volcanii (strain ATCC 29605 / DSM 3757 / JCM 8879 / NBRC 14742 / NCIMB 2012 / VKM B-1768 / DS2)</name>
    <name type="common">Halobacterium volcanii</name>
    <dbReference type="NCBI Taxonomy" id="309800"/>
    <lineage>
        <taxon>Archaea</taxon>
        <taxon>Methanobacteriati</taxon>
        <taxon>Methanobacteriota</taxon>
        <taxon>Stenosarchaea group</taxon>
        <taxon>Halobacteria</taxon>
        <taxon>Halobacteriales</taxon>
        <taxon>Haloferacaceae</taxon>
        <taxon>Haloferax</taxon>
    </lineage>
</organism>
<protein>
    <recommendedName>
        <fullName evidence="1">CRISPR-associated endonuclease Cas1</fullName>
        <ecNumber evidence="1">3.1.-.-</ecNumber>
    </recommendedName>
</protein>
<evidence type="ECO:0000255" key="1">
    <source>
        <dbReference type="HAMAP-Rule" id="MF_01470"/>
    </source>
</evidence>
<evidence type="ECO:0000269" key="2">
    <source>
    </source>
</evidence>
<evidence type="ECO:0000303" key="3">
    <source>
    </source>
</evidence>
<evidence type="ECO:0000303" key="4">
    <source>
    </source>
</evidence>
<evidence type="ECO:0000312" key="5">
    <source>
        <dbReference type="Proteomes" id="UP000008243"/>
    </source>
</evidence>
<dbReference type="EC" id="3.1.-.-" evidence="1"/>
<dbReference type="EMBL" id="CP001955">
    <property type="protein sequence ID" value="ADE01744.1"/>
    <property type="molecule type" value="Genomic_DNA"/>
</dbReference>
<dbReference type="RefSeq" id="WP_013035043.1">
    <property type="nucleotide sequence ID" value="NC_013966.1"/>
</dbReference>
<dbReference type="SMR" id="D4GQP0"/>
<dbReference type="PaxDb" id="309800-C498_09736"/>
<dbReference type="EnsemblBacteria" id="ADE01744">
    <property type="protein sequence ID" value="ADE01744"/>
    <property type="gene ID" value="HVO_A0211"/>
</dbReference>
<dbReference type="GeneID" id="8923750"/>
<dbReference type="KEGG" id="hvo:HVO_A0211"/>
<dbReference type="eggNOG" id="arCOG01452">
    <property type="taxonomic scope" value="Archaea"/>
</dbReference>
<dbReference type="HOGENOM" id="CLU_052779_2_0_2"/>
<dbReference type="OrthoDB" id="2216at2157"/>
<dbReference type="Proteomes" id="UP000008243">
    <property type="component" value="Plasmid pHV4"/>
</dbReference>
<dbReference type="GO" id="GO:0003677">
    <property type="term" value="F:DNA binding"/>
    <property type="evidence" value="ECO:0007669"/>
    <property type="project" value="UniProtKB-KW"/>
</dbReference>
<dbReference type="GO" id="GO:0004520">
    <property type="term" value="F:DNA endonuclease activity"/>
    <property type="evidence" value="ECO:0007669"/>
    <property type="project" value="InterPro"/>
</dbReference>
<dbReference type="GO" id="GO:0046872">
    <property type="term" value="F:metal ion binding"/>
    <property type="evidence" value="ECO:0007669"/>
    <property type="project" value="UniProtKB-UniRule"/>
</dbReference>
<dbReference type="GO" id="GO:0051607">
    <property type="term" value="P:defense response to virus"/>
    <property type="evidence" value="ECO:0007669"/>
    <property type="project" value="UniProtKB-UniRule"/>
</dbReference>
<dbReference type="GO" id="GO:0043571">
    <property type="term" value="P:maintenance of CRISPR repeat elements"/>
    <property type="evidence" value="ECO:0007669"/>
    <property type="project" value="UniProtKB-UniRule"/>
</dbReference>
<dbReference type="CDD" id="cd09722">
    <property type="entry name" value="Cas1_I-B"/>
    <property type="match status" value="1"/>
</dbReference>
<dbReference type="Gene3D" id="1.20.120.920">
    <property type="entry name" value="CRISPR-associated endonuclease Cas1, C-terminal domain"/>
    <property type="match status" value="1"/>
</dbReference>
<dbReference type="Gene3D" id="3.100.10.20">
    <property type="entry name" value="CRISPR-associated endonuclease Cas1, N-terminal domain"/>
    <property type="match status" value="1"/>
</dbReference>
<dbReference type="HAMAP" id="MF_01470">
    <property type="entry name" value="Cas1"/>
    <property type="match status" value="1"/>
</dbReference>
<dbReference type="InterPro" id="IPR002729">
    <property type="entry name" value="CRISPR-assoc_Cas1"/>
</dbReference>
<dbReference type="InterPro" id="IPR042206">
    <property type="entry name" value="CRISPR-assoc_Cas1_C"/>
</dbReference>
<dbReference type="InterPro" id="IPR019858">
    <property type="entry name" value="CRISPR-assoc_Cas1_HMARI/TNEAP"/>
</dbReference>
<dbReference type="InterPro" id="IPR042211">
    <property type="entry name" value="CRISPR-assoc_Cas1_N"/>
</dbReference>
<dbReference type="NCBIfam" id="TIGR00287">
    <property type="entry name" value="cas1"/>
    <property type="match status" value="1"/>
</dbReference>
<dbReference type="NCBIfam" id="TIGR03641">
    <property type="entry name" value="cas1_HMARI"/>
    <property type="match status" value="1"/>
</dbReference>
<dbReference type="PANTHER" id="PTHR43219">
    <property type="entry name" value="CRISPR-ASSOCIATED ENDONUCLEASE CAS1"/>
    <property type="match status" value="1"/>
</dbReference>
<dbReference type="PANTHER" id="PTHR43219:SF2">
    <property type="entry name" value="CRISPR-ASSOCIATED ENDONUCLEASE CAS1"/>
    <property type="match status" value="1"/>
</dbReference>
<dbReference type="Pfam" id="PF01867">
    <property type="entry name" value="Cas_Cas1"/>
    <property type="match status" value="1"/>
</dbReference>
<keyword id="KW-0051">Antiviral defense</keyword>
<keyword id="KW-0238">DNA-binding</keyword>
<keyword id="KW-0255">Endonuclease</keyword>
<keyword id="KW-0378">Hydrolase</keyword>
<keyword id="KW-0460">Magnesium</keyword>
<keyword id="KW-0464">Manganese</keyword>
<keyword id="KW-0479">Metal-binding</keyword>
<keyword id="KW-0540">Nuclease</keyword>
<keyword id="KW-0614">Plasmid</keyword>
<keyword id="KW-1185">Reference proteome</keyword>
<name>CAS1_HALVD</name>
<accession>D4GQP0</accession>